<protein>
    <recommendedName>
        <fullName evidence="1">Acetylornithine aminotransferase</fullName>
        <shortName evidence="1">ACOAT</shortName>
        <ecNumber evidence="1">2.6.1.11</ecNumber>
    </recommendedName>
</protein>
<dbReference type="EC" id="2.6.1.11" evidence="1"/>
<dbReference type="EMBL" id="BA000031">
    <property type="protein sequence ID" value="BAC61060.1"/>
    <property type="molecule type" value="Genomic_DNA"/>
</dbReference>
<dbReference type="RefSeq" id="NP_799176.1">
    <property type="nucleotide sequence ID" value="NC_004603.1"/>
</dbReference>
<dbReference type="RefSeq" id="WP_005458126.1">
    <property type="nucleotide sequence ID" value="NC_004603.1"/>
</dbReference>
<dbReference type="SMR" id="Q87L20"/>
<dbReference type="GeneID" id="1190347"/>
<dbReference type="KEGG" id="vpa:VP2797"/>
<dbReference type="PATRIC" id="fig|223926.6.peg.2691"/>
<dbReference type="eggNOG" id="COG4992">
    <property type="taxonomic scope" value="Bacteria"/>
</dbReference>
<dbReference type="HOGENOM" id="CLU_016922_10_1_6"/>
<dbReference type="UniPathway" id="UPA00068">
    <property type="reaction ID" value="UER00109"/>
</dbReference>
<dbReference type="Proteomes" id="UP000002493">
    <property type="component" value="Chromosome 1"/>
</dbReference>
<dbReference type="GO" id="GO:0005737">
    <property type="term" value="C:cytoplasm"/>
    <property type="evidence" value="ECO:0007669"/>
    <property type="project" value="UniProtKB-SubCell"/>
</dbReference>
<dbReference type="GO" id="GO:0042802">
    <property type="term" value="F:identical protein binding"/>
    <property type="evidence" value="ECO:0007669"/>
    <property type="project" value="TreeGrafter"/>
</dbReference>
<dbReference type="GO" id="GO:0003992">
    <property type="term" value="F:N2-acetyl-L-ornithine:2-oxoglutarate 5-aminotransferase activity"/>
    <property type="evidence" value="ECO:0007669"/>
    <property type="project" value="UniProtKB-UniRule"/>
</dbReference>
<dbReference type="GO" id="GO:0030170">
    <property type="term" value="F:pyridoxal phosphate binding"/>
    <property type="evidence" value="ECO:0007669"/>
    <property type="project" value="InterPro"/>
</dbReference>
<dbReference type="GO" id="GO:0006526">
    <property type="term" value="P:L-arginine biosynthetic process"/>
    <property type="evidence" value="ECO:0007669"/>
    <property type="project" value="UniProtKB-UniRule"/>
</dbReference>
<dbReference type="CDD" id="cd00610">
    <property type="entry name" value="OAT_like"/>
    <property type="match status" value="1"/>
</dbReference>
<dbReference type="FunFam" id="3.40.640.10:FF:000004">
    <property type="entry name" value="Acetylornithine aminotransferase"/>
    <property type="match status" value="1"/>
</dbReference>
<dbReference type="Gene3D" id="3.90.1150.10">
    <property type="entry name" value="Aspartate Aminotransferase, domain 1"/>
    <property type="match status" value="1"/>
</dbReference>
<dbReference type="Gene3D" id="3.40.640.10">
    <property type="entry name" value="Type I PLP-dependent aspartate aminotransferase-like (Major domain)"/>
    <property type="match status" value="1"/>
</dbReference>
<dbReference type="HAMAP" id="MF_01107">
    <property type="entry name" value="ArgD_aminotrans_3"/>
    <property type="match status" value="1"/>
</dbReference>
<dbReference type="InterPro" id="IPR017652">
    <property type="entry name" value="Ac/SucOrn_transaminase_bac"/>
</dbReference>
<dbReference type="InterPro" id="IPR004636">
    <property type="entry name" value="AcOrn/SuccOrn_fam"/>
</dbReference>
<dbReference type="InterPro" id="IPR005814">
    <property type="entry name" value="Aminotrans_3"/>
</dbReference>
<dbReference type="InterPro" id="IPR049704">
    <property type="entry name" value="Aminotrans_3_PPA_site"/>
</dbReference>
<dbReference type="InterPro" id="IPR050103">
    <property type="entry name" value="Class-III_PLP-dep_AT"/>
</dbReference>
<dbReference type="InterPro" id="IPR015424">
    <property type="entry name" value="PyrdxlP-dep_Trfase"/>
</dbReference>
<dbReference type="InterPro" id="IPR015421">
    <property type="entry name" value="PyrdxlP-dep_Trfase_major"/>
</dbReference>
<dbReference type="InterPro" id="IPR015422">
    <property type="entry name" value="PyrdxlP-dep_Trfase_small"/>
</dbReference>
<dbReference type="NCBIfam" id="TIGR03246">
    <property type="entry name" value="arg_catab_astC"/>
    <property type="match status" value="1"/>
</dbReference>
<dbReference type="NCBIfam" id="TIGR00707">
    <property type="entry name" value="argD"/>
    <property type="match status" value="1"/>
</dbReference>
<dbReference type="NCBIfam" id="NF002325">
    <property type="entry name" value="PRK01278.1"/>
    <property type="match status" value="1"/>
</dbReference>
<dbReference type="NCBIfam" id="NF003468">
    <property type="entry name" value="PRK05093.1"/>
    <property type="match status" value="1"/>
</dbReference>
<dbReference type="PANTHER" id="PTHR11986">
    <property type="entry name" value="AMINOTRANSFERASE CLASS III"/>
    <property type="match status" value="1"/>
</dbReference>
<dbReference type="PANTHER" id="PTHR11986:SF113">
    <property type="entry name" value="SUCCINYLORNITHINE TRANSAMINASE"/>
    <property type="match status" value="1"/>
</dbReference>
<dbReference type="Pfam" id="PF00202">
    <property type="entry name" value="Aminotran_3"/>
    <property type="match status" value="1"/>
</dbReference>
<dbReference type="PIRSF" id="PIRSF000521">
    <property type="entry name" value="Transaminase_4ab_Lys_Orn"/>
    <property type="match status" value="1"/>
</dbReference>
<dbReference type="SUPFAM" id="SSF53383">
    <property type="entry name" value="PLP-dependent transferases"/>
    <property type="match status" value="1"/>
</dbReference>
<dbReference type="PROSITE" id="PS00600">
    <property type="entry name" value="AA_TRANSFER_CLASS_3"/>
    <property type="match status" value="1"/>
</dbReference>
<comment type="catalytic activity">
    <reaction evidence="1">
        <text>N(2)-acetyl-L-ornithine + 2-oxoglutarate = N-acetyl-L-glutamate 5-semialdehyde + L-glutamate</text>
        <dbReference type="Rhea" id="RHEA:18049"/>
        <dbReference type="ChEBI" id="CHEBI:16810"/>
        <dbReference type="ChEBI" id="CHEBI:29123"/>
        <dbReference type="ChEBI" id="CHEBI:29985"/>
        <dbReference type="ChEBI" id="CHEBI:57805"/>
        <dbReference type="EC" id="2.6.1.11"/>
    </reaction>
</comment>
<comment type="cofactor">
    <cofactor evidence="1">
        <name>pyridoxal 5'-phosphate</name>
        <dbReference type="ChEBI" id="CHEBI:597326"/>
    </cofactor>
    <text evidence="1">Binds 1 pyridoxal phosphate per subunit.</text>
</comment>
<comment type="pathway">
    <text evidence="1">Amino-acid biosynthesis; L-arginine biosynthesis; N(2)-acetyl-L-ornithine from L-glutamate: step 4/4.</text>
</comment>
<comment type="subunit">
    <text evidence="1">Homodimer.</text>
</comment>
<comment type="subcellular location">
    <subcellularLocation>
        <location evidence="1">Cytoplasm</location>
    </subcellularLocation>
</comment>
<comment type="miscellaneous">
    <text evidence="1">May also have succinyldiaminopimelate aminotransferase activity, thus carrying out the corresponding step in lysine biosynthesis.</text>
</comment>
<comment type="similarity">
    <text evidence="1">Belongs to the class-III pyridoxal-phosphate-dependent aminotransferase family. ArgD subfamily.</text>
</comment>
<reference key="1">
    <citation type="journal article" date="2003" name="Lancet">
        <title>Genome sequence of Vibrio parahaemolyticus: a pathogenic mechanism distinct from that of V. cholerae.</title>
        <authorList>
            <person name="Makino K."/>
            <person name="Oshima K."/>
            <person name="Kurokawa K."/>
            <person name="Yokoyama K."/>
            <person name="Uda T."/>
            <person name="Tagomori K."/>
            <person name="Iijima Y."/>
            <person name="Najima M."/>
            <person name="Nakano M."/>
            <person name="Yamashita A."/>
            <person name="Kubota Y."/>
            <person name="Kimura S."/>
            <person name="Yasunaga T."/>
            <person name="Honda T."/>
            <person name="Shinagawa H."/>
            <person name="Hattori M."/>
            <person name="Iida T."/>
        </authorList>
    </citation>
    <scope>NUCLEOTIDE SEQUENCE [LARGE SCALE GENOMIC DNA]</scope>
    <source>
        <strain>RIMD 2210633</strain>
    </source>
</reference>
<feature type="chain" id="PRO_0000112809" description="Acetylornithine aminotransferase">
    <location>
        <begin position="1"/>
        <end position="403"/>
    </location>
</feature>
<feature type="binding site" evidence="1">
    <location>
        <begin position="107"/>
        <end position="108"/>
    </location>
    <ligand>
        <name>pyridoxal 5'-phosphate</name>
        <dbReference type="ChEBI" id="CHEBI:597326"/>
    </ligand>
</feature>
<feature type="binding site" evidence="1">
    <location>
        <position position="140"/>
    </location>
    <ligand>
        <name>pyridoxal 5'-phosphate</name>
        <dbReference type="ChEBI" id="CHEBI:597326"/>
    </ligand>
</feature>
<feature type="binding site" evidence="1">
    <location>
        <position position="143"/>
    </location>
    <ligand>
        <name>N(2)-acetyl-L-ornithine</name>
        <dbReference type="ChEBI" id="CHEBI:57805"/>
    </ligand>
</feature>
<feature type="binding site" evidence="1">
    <location>
        <begin position="225"/>
        <end position="228"/>
    </location>
    <ligand>
        <name>pyridoxal 5'-phosphate</name>
        <dbReference type="ChEBI" id="CHEBI:597326"/>
    </ligand>
</feature>
<feature type="binding site" evidence="1">
    <location>
        <position position="282"/>
    </location>
    <ligand>
        <name>N(2)-acetyl-L-ornithine</name>
        <dbReference type="ChEBI" id="CHEBI:57805"/>
    </ligand>
</feature>
<feature type="binding site" evidence="1">
    <location>
        <position position="283"/>
    </location>
    <ligand>
        <name>pyridoxal 5'-phosphate</name>
        <dbReference type="ChEBI" id="CHEBI:597326"/>
    </ligand>
</feature>
<feature type="modified residue" description="N6-(pyridoxal phosphate)lysine" evidence="1">
    <location>
        <position position="254"/>
    </location>
</feature>
<accession>Q87L20</accession>
<name>ARGD_VIBPA</name>
<organism>
    <name type="scientific">Vibrio parahaemolyticus serotype O3:K6 (strain RIMD 2210633)</name>
    <dbReference type="NCBI Taxonomy" id="223926"/>
    <lineage>
        <taxon>Bacteria</taxon>
        <taxon>Pseudomonadati</taxon>
        <taxon>Pseudomonadota</taxon>
        <taxon>Gammaproteobacteria</taxon>
        <taxon>Vibrionales</taxon>
        <taxon>Vibrionaceae</taxon>
        <taxon>Vibrio</taxon>
    </lineage>
</organism>
<sequence length="403" mass="43362">MTTEIKVERGLFDEVMVPCYNPMEMIPVRGKGSRIWDQDDNEYIDFAGGIAVSCLGHCHPVMVDALTEQGNKLWHLSNVMTNEPALRLAKKLTEVSFAERVFFANSGAEANEAALKLARRYAADVHGPEKSEIIAFKQGFHGRTFFTVTVGGQAAYSDGFGPKPGDVTHLPYNDIEALQAHMSDRTCAVMMEPLQGEGGIVPPTPEFAQAVRELCDKHNALLIFDEVQTGNGRTGHFYAYQGLGITPDILSTAKSLGGGFPIGAMLTTAKLAEHLKVGTHGSTYGGNPLACAVAEAVVNEVTKPEVLAGVLEREALFRAGLEKINAKYNLFSEVRGKGLLLGAALNEEWQGRARDVLVAAGKQGLLVLVAGANVVRFTPSLVITQQEIEEGLAKLDKAIATLV</sequence>
<proteinExistence type="inferred from homology"/>
<evidence type="ECO:0000255" key="1">
    <source>
        <dbReference type="HAMAP-Rule" id="MF_01107"/>
    </source>
</evidence>
<keyword id="KW-0028">Amino-acid biosynthesis</keyword>
<keyword id="KW-0032">Aminotransferase</keyword>
<keyword id="KW-0055">Arginine biosynthesis</keyword>
<keyword id="KW-0963">Cytoplasm</keyword>
<keyword id="KW-0663">Pyridoxal phosphate</keyword>
<keyword id="KW-0808">Transferase</keyword>
<gene>
    <name evidence="1" type="primary">argD</name>
    <name type="ordered locus">VP2797</name>
</gene>